<sequence>MRTSLVVCLFWLLFQLHTTHGYNTLVNLAGNWEFSSSNKTVNGTGTVPGDIYSDLYASGIIDNPLFGENHLNLKWIAEDDWTYSRKFRLIDLDDTVGAFLEIESVDTIATVYVNGQKVLHSRNQFLPYHVNVTDIIALGENDITIKFKSSVKYAEKRADEYKKIFGHSLPPDCNPDIYHGECHQNFIRKAQYSFAWDWGPSFPTVGIPSTITINIYRGQYFHDFNWKTRFAHGKWKVAFEFDTFHYGARTIEYSVQIPELGIKESDYYRLSATKSLQTRSKNIMSLSIPMEHEPERWWPNGMGEQKLYDVVVSMGGQVKEKKIGFKTVELVQDLIDPKKPEKGRNFYFKINDEPVFLKGTNWIPVSMFRSDRENIAKTEFLLDSVAEVGMNAIRVWGGGFYESNHFYYYASKKGILVWQDLMFACALYPTTEEFIQNAEEEVSYNVDRISQHTSVIVFSGNNENEAAIRGHWWKASNYTESQQVKDYVLLYQRLAKIAKKVAPTIPFIMSSPSNGVETEEEGGVSKNPYDVRYGDIHYYNEFVNLWRDDTYLTPRCASEYGVQSYPMKETMLNWINESDWEYTSKAMFHRQHHPGGIATNLLMIFQHLPIPAECGSKSVSDVPSCKYISSASYMSRLAYFSQVHQSIALKTQTLHYRRFRNTTTNEGLGNTMCAMYWQLNDVWAAPTWSTIDFEQNWKMAHYEARRFFSNVAVYSFADETDFNLKVFLLNDNPYLLHNITVNVQMLSWGNGLDPILTNEFHIDSVPAGSSEVLKTGITFSKITELSEYLYVSTLYDSSGVKIHEDVLVPDFLFEVDFNTFGDVQISDVQRIDEKTYDLTITTDRVSPFTWITCKKPFTGWFSDNGFHMIQRLRKIRLIAKFEVDLEKSDFTVCNLKNCYV</sequence>
<keyword id="KW-0325">Glycoprotein</keyword>
<keyword id="KW-0326">Glycosidase</keyword>
<keyword id="KW-0378">Hydrolase</keyword>
<keyword id="KW-0458">Lysosome</keyword>
<keyword id="KW-1185">Reference proteome</keyword>
<keyword id="KW-0732">Signal</keyword>
<gene>
    <name type="ORF">C33G3.4</name>
</gene>
<evidence type="ECO:0000250" key="1"/>
<evidence type="ECO:0000255" key="2"/>
<evidence type="ECO:0000269" key="3">
    <source>
    </source>
</evidence>
<evidence type="ECO:0000305" key="4"/>
<accession>Q93324</accession>
<proteinExistence type="evidence at protein level"/>
<protein>
    <recommendedName>
        <fullName>Probable beta-mannosidase</fullName>
        <ecNumber>3.2.1.25</ecNumber>
    </recommendedName>
    <alternativeName>
        <fullName>Mannanase</fullName>
        <shortName>Mannase</shortName>
    </alternativeName>
</protein>
<comment type="catalytic activity">
    <reaction>
        <text>Hydrolysis of terminal, non-reducing beta-D-mannose residues in beta-D-mannosides.</text>
        <dbReference type="EC" id="3.2.1.25"/>
    </reaction>
</comment>
<comment type="subcellular location">
    <subcellularLocation>
        <location evidence="4">Lysosome</location>
    </subcellularLocation>
</comment>
<comment type="similarity">
    <text evidence="4">Belongs to the glycosyl hydrolase 2 family.</text>
</comment>
<dbReference type="EC" id="3.2.1.25"/>
<dbReference type="EMBL" id="Z78540">
    <property type="protein sequence ID" value="CAB01737.1"/>
    <property type="molecule type" value="Genomic_DNA"/>
</dbReference>
<dbReference type="PIR" id="T19689">
    <property type="entry name" value="T19689"/>
</dbReference>
<dbReference type="RefSeq" id="NP_510342.1">
    <property type="nucleotide sequence ID" value="NM_077941.7"/>
</dbReference>
<dbReference type="SMR" id="Q93324"/>
<dbReference type="FunCoup" id="Q93324">
    <property type="interactions" value="2353"/>
</dbReference>
<dbReference type="STRING" id="6239.C33G3.4.1"/>
<dbReference type="CAZy" id="GH2">
    <property type="family name" value="Glycoside Hydrolase Family 2"/>
</dbReference>
<dbReference type="iPTMnet" id="Q93324"/>
<dbReference type="PaxDb" id="6239-C33G3.4"/>
<dbReference type="PeptideAtlas" id="Q93324"/>
<dbReference type="EnsemblMetazoa" id="C33G3.4.1">
    <property type="protein sequence ID" value="C33G3.4.1"/>
    <property type="gene ID" value="WBGene00007904"/>
</dbReference>
<dbReference type="GeneID" id="181517"/>
<dbReference type="KEGG" id="cel:CELE_C33G3.4"/>
<dbReference type="UCSC" id="C33G3.4">
    <property type="organism name" value="c. elegans"/>
</dbReference>
<dbReference type="AGR" id="WB:WBGene00007904"/>
<dbReference type="CTD" id="181517"/>
<dbReference type="WormBase" id="C33G3.4">
    <property type="protein sequence ID" value="CE08560"/>
    <property type="gene ID" value="WBGene00007904"/>
</dbReference>
<dbReference type="eggNOG" id="KOG2230">
    <property type="taxonomic scope" value="Eukaryota"/>
</dbReference>
<dbReference type="GeneTree" id="ENSGT00390000001670"/>
<dbReference type="HOGENOM" id="CLU_005015_3_1_1"/>
<dbReference type="InParanoid" id="Q93324"/>
<dbReference type="OMA" id="PWKPAYI"/>
<dbReference type="OrthoDB" id="2866996at2759"/>
<dbReference type="PhylomeDB" id="Q93324"/>
<dbReference type="Reactome" id="R-CEL-6798695">
    <property type="pathway name" value="Neutrophil degranulation"/>
</dbReference>
<dbReference type="Reactome" id="R-CEL-8853383">
    <property type="pathway name" value="Lysosomal oligosaccharide catabolism"/>
</dbReference>
<dbReference type="PRO" id="PR:Q93324"/>
<dbReference type="Proteomes" id="UP000001940">
    <property type="component" value="Chromosome X"/>
</dbReference>
<dbReference type="Bgee" id="WBGene00007904">
    <property type="expression patterns" value="Expressed in embryo and 3 other cell types or tissues"/>
</dbReference>
<dbReference type="GO" id="GO:0005764">
    <property type="term" value="C:lysosome"/>
    <property type="evidence" value="ECO:0007669"/>
    <property type="project" value="UniProtKB-SubCell"/>
</dbReference>
<dbReference type="GO" id="GO:0004567">
    <property type="term" value="F:beta-mannosidase activity"/>
    <property type="evidence" value="ECO:0000318"/>
    <property type="project" value="GO_Central"/>
</dbReference>
<dbReference type="GO" id="GO:0005975">
    <property type="term" value="P:carbohydrate metabolic process"/>
    <property type="evidence" value="ECO:0007669"/>
    <property type="project" value="InterPro"/>
</dbReference>
<dbReference type="GO" id="GO:0006516">
    <property type="term" value="P:glycoprotein catabolic process"/>
    <property type="evidence" value="ECO:0000318"/>
    <property type="project" value="GO_Central"/>
</dbReference>
<dbReference type="FunFam" id="3.20.20.80:FF:000050">
    <property type="entry name" value="Beta-mannosidase B"/>
    <property type="match status" value="1"/>
</dbReference>
<dbReference type="FunFam" id="2.60.120.260:FF:000060">
    <property type="entry name" value="Probable beta-mannosidase"/>
    <property type="match status" value="1"/>
</dbReference>
<dbReference type="FunFam" id="2.60.40.10:FF:003044">
    <property type="entry name" value="Probable beta-mannosidase"/>
    <property type="match status" value="1"/>
</dbReference>
<dbReference type="Gene3D" id="2.60.120.260">
    <property type="entry name" value="Galactose-binding domain-like"/>
    <property type="match status" value="1"/>
</dbReference>
<dbReference type="Gene3D" id="3.20.20.80">
    <property type="entry name" value="Glycosidases"/>
    <property type="match status" value="1"/>
</dbReference>
<dbReference type="Gene3D" id="2.60.40.10">
    <property type="entry name" value="Immunoglobulins"/>
    <property type="match status" value="2"/>
</dbReference>
<dbReference type="InterPro" id="IPR036156">
    <property type="entry name" value="Beta-gal/glucu_dom_sf"/>
</dbReference>
<dbReference type="InterPro" id="IPR054593">
    <property type="entry name" value="Beta-mannosidase-like_N2"/>
</dbReference>
<dbReference type="InterPro" id="IPR050887">
    <property type="entry name" value="Beta-mannosidase_GH2"/>
</dbReference>
<dbReference type="InterPro" id="IPR041625">
    <property type="entry name" value="Beta-mannosidase_Ig"/>
</dbReference>
<dbReference type="InterPro" id="IPR008979">
    <property type="entry name" value="Galactose-bd-like_sf"/>
</dbReference>
<dbReference type="InterPro" id="IPR006102">
    <property type="entry name" value="Glyco_hydro_2_Ig-like"/>
</dbReference>
<dbReference type="InterPro" id="IPR017853">
    <property type="entry name" value="Glycoside_hydrolase_SF"/>
</dbReference>
<dbReference type="InterPro" id="IPR013783">
    <property type="entry name" value="Ig-like_fold"/>
</dbReference>
<dbReference type="PANTHER" id="PTHR43730">
    <property type="entry name" value="BETA-MANNOSIDASE"/>
    <property type="match status" value="1"/>
</dbReference>
<dbReference type="PANTHER" id="PTHR43730:SF1">
    <property type="entry name" value="BETA-MANNOSIDASE"/>
    <property type="match status" value="1"/>
</dbReference>
<dbReference type="Pfam" id="PF00703">
    <property type="entry name" value="Glyco_hydro_2"/>
    <property type="match status" value="1"/>
</dbReference>
<dbReference type="Pfam" id="PF22666">
    <property type="entry name" value="Glyco_hydro_2_N2"/>
    <property type="match status" value="1"/>
</dbReference>
<dbReference type="Pfam" id="PF17753">
    <property type="entry name" value="Ig_mannosidase"/>
    <property type="match status" value="1"/>
</dbReference>
<dbReference type="SUPFAM" id="SSF51445">
    <property type="entry name" value="(Trans)glycosidases"/>
    <property type="match status" value="1"/>
</dbReference>
<dbReference type="SUPFAM" id="SSF49303">
    <property type="entry name" value="beta-Galactosidase/glucuronidase domain"/>
    <property type="match status" value="1"/>
</dbReference>
<dbReference type="SUPFAM" id="SSF49785">
    <property type="entry name" value="Galactose-binding domain-like"/>
    <property type="match status" value="1"/>
</dbReference>
<organism>
    <name type="scientific">Caenorhabditis elegans</name>
    <dbReference type="NCBI Taxonomy" id="6239"/>
    <lineage>
        <taxon>Eukaryota</taxon>
        <taxon>Metazoa</taxon>
        <taxon>Ecdysozoa</taxon>
        <taxon>Nematoda</taxon>
        <taxon>Chromadorea</taxon>
        <taxon>Rhabditida</taxon>
        <taxon>Rhabditina</taxon>
        <taxon>Rhabditomorpha</taxon>
        <taxon>Rhabditoidea</taxon>
        <taxon>Rhabditidae</taxon>
        <taxon>Peloderinae</taxon>
        <taxon>Caenorhabditis</taxon>
    </lineage>
</organism>
<name>MANBA_CAEEL</name>
<reference key="1">
    <citation type="journal article" date="1998" name="Science">
        <title>Genome sequence of the nematode C. elegans: a platform for investigating biology.</title>
        <authorList>
            <consortium name="The C. elegans sequencing consortium"/>
        </authorList>
    </citation>
    <scope>NUCLEOTIDE SEQUENCE [LARGE SCALE GENOMIC DNA]</scope>
    <source>
        <strain>Bristol N2</strain>
    </source>
</reference>
<reference key="2">
    <citation type="journal article" date="2007" name="Mol. Cell. Proteomics">
        <title>Proteomics reveals N-linked glycoprotein diversity in Caenorhabditis elegans and suggests an atypical translocation mechanism for integral membrane proteins.</title>
        <authorList>
            <person name="Kaji H."/>
            <person name="Kamiie J."/>
            <person name="Kawakami H."/>
            <person name="Kido K."/>
            <person name="Yamauchi Y."/>
            <person name="Shinkawa T."/>
            <person name="Taoka M."/>
            <person name="Takahashi N."/>
            <person name="Isobe T."/>
        </authorList>
    </citation>
    <scope>GLYCOSYLATION [LARGE SCALE ANALYSIS] AT ASN-131 AND ASN-477</scope>
    <scope>IDENTIFICATION BY MASS SPECTROMETRY</scope>
    <source>
        <strain>Bristol N2</strain>
    </source>
</reference>
<feature type="signal peptide" evidence="2">
    <location>
        <begin position="1"/>
        <end position="21"/>
    </location>
</feature>
<feature type="chain" id="PRO_0000012167" description="Probable beta-mannosidase">
    <location>
        <begin position="22"/>
        <end position="900"/>
    </location>
</feature>
<feature type="active site" description="Proton donor" evidence="1">
    <location>
        <position position="463"/>
    </location>
</feature>
<feature type="glycosylation site" description="N-linked (GlcNAc...) asparagine" evidence="2">
    <location>
        <position position="38"/>
    </location>
</feature>
<feature type="glycosylation site" description="N-linked (GlcNAc...) asparagine" evidence="2">
    <location>
        <position position="42"/>
    </location>
</feature>
<feature type="glycosylation site" description="N-linked (GlcNAc...) asparagine" evidence="3">
    <location>
        <position position="131"/>
    </location>
</feature>
<feature type="glycosylation site" description="N-linked (GlcNAc...) asparagine" evidence="3">
    <location>
        <position position="477"/>
    </location>
</feature>
<feature type="glycosylation site" description="N-linked (GlcNAc...) asparagine" evidence="2">
    <location>
        <position position="576"/>
    </location>
</feature>
<feature type="glycosylation site" description="N-linked (GlcNAc...) asparagine" evidence="2">
    <location>
        <position position="661"/>
    </location>
</feature>
<feature type="glycosylation site" description="N-linked (GlcNAc...) asparagine" evidence="2">
    <location>
        <position position="738"/>
    </location>
</feature>